<name>MOCOS_ASPFC</name>
<evidence type="ECO:0000255" key="1">
    <source>
        <dbReference type="HAMAP-Rule" id="MF_03050"/>
    </source>
</evidence>
<gene>
    <name evidence="1" type="primary">hxB</name>
    <name type="ORF">AFUB_066090</name>
</gene>
<comment type="function">
    <text evidence="1">Sulfurates the molybdenum cofactor. Sulfation of molybdenum is essential for xanthine dehydrogenase (XDH) and aldehyde oxidase (ADO) enzymes in which molybdenum cofactor is liganded by 1 oxygen and 1 sulfur atom in active form.</text>
</comment>
<comment type="catalytic activity">
    <reaction evidence="1">
        <text>Mo-molybdopterin + L-cysteine + AH2 = thio-Mo-molybdopterin + L-alanine + A + H2O</text>
        <dbReference type="Rhea" id="RHEA:42636"/>
        <dbReference type="ChEBI" id="CHEBI:13193"/>
        <dbReference type="ChEBI" id="CHEBI:15377"/>
        <dbReference type="ChEBI" id="CHEBI:17499"/>
        <dbReference type="ChEBI" id="CHEBI:35235"/>
        <dbReference type="ChEBI" id="CHEBI:57972"/>
        <dbReference type="ChEBI" id="CHEBI:71302"/>
        <dbReference type="ChEBI" id="CHEBI:82685"/>
        <dbReference type="EC" id="2.8.1.9"/>
    </reaction>
</comment>
<comment type="cofactor">
    <cofactor evidence="1">
        <name>pyridoxal 5'-phosphate</name>
        <dbReference type="ChEBI" id="CHEBI:597326"/>
    </cofactor>
</comment>
<comment type="similarity">
    <text evidence="1">Belongs to the class-V pyridoxal-phosphate-dependent aminotransferase family. MOCOS subfamily.</text>
</comment>
<feature type="chain" id="PRO_0000369379" description="Molybdenum cofactor sulfurase">
    <location>
        <begin position="1"/>
        <end position="843"/>
    </location>
</feature>
<feature type="domain" description="MOSC" evidence="1">
    <location>
        <begin position="657"/>
        <end position="836"/>
    </location>
</feature>
<feature type="active site" evidence="1">
    <location>
        <position position="405"/>
    </location>
</feature>
<feature type="modified residue" description="N6-(pyridoxal phosphate)lysine" evidence="1">
    <location>
        <position position="241"/>
    </location>
</feature>
<organism>
    <name type="scientific">Aspergillus fumigatus (strain CBS 144.89 / FGSC A1163 / CEA10)</name>
    <name type="common">Neosartorya fumigata</name>
    <dbReference type="NCBI Taxonomy" id="451804"/>
    <lineage>
        <taxon>Eukaryota</taxon>
        <taxon>Fungi</taxon>
        <taxon>Dikarya</taxon>
        <taxon>Ascomycota</taxon>
        <taxon>Pezizomycotina</taxon>
        <taxon>Eurotiomycetes</taxon>
        <taxon>Eurotiomycetidae</taxon>
        <taxon>Eurotiales</taxon>
        <taxon>Aspergillaceae</taxon>
        <taxon>Aspergillus</taxon>
        <taxon>Aspergillus subgen. Fumigati</taxon>
    </lineage>
</organism>
<accession>B0Y691</accession>
<sequence>MVGVTSCEEEILEYGRGYSEDVDTIREREYPQLKDTTYLDHAGTTLYAKSLIESFSRELTSNLFGNPHSLSTSSQLSTQRVDDVRLRALRFFKADPEEFDLVFVANATAAIKLVADGMRDSTRQGFWYGYHVDAHTSLVGVRELAEKGGRCFTSDDEVEDWISRLCDVRSESLKLFAYPAQSNMNGRRLPFSWCKKIRDQGETTGGNVYTLLDAASLVSTSPLDLSDASAAPDFTVLSFYKIFGFPDLGALIVRKSAGQIFEHRRYFGGGTVDMVLTRGLQWHAKKQSSIHDRLEDGTLPFHNIIALDSAFATHERLFGSMQNISSHTRFLAKRLYDRLNALRHFNGQRVCELYKSPRSDYNQPSTQGPIIAFNLRNSQGSWIGKSEVERLAATKNIQIRSGSLCNPGGTSGSLGWTGADLLQQFSAGLRCGDDHDVMDGRPTGVLRLSLGPMTNLEDINTFVELVEEFYVEKAATVDSLVAPVHSVPLQQPRFYIESLSLYPIKSCGPFKVPDGRRWEIRREGLAWDREWCLIHQGTGAALNQKKYPRMALIRPSIDLDRNVLRVTCGEPGSTDQKLLEVSLLRENTELATTSLCQRTSKASTVCGDQVTVQAYTSPPVAQFFSDFLGVPCTLARFPPHSSTRYASPRKAPGAWKQYLRKFVMPGSFPQDPSPPPAEKHPILLSNESPILLISRSSVNYLNENIKANQKKIRTGTSKAVAADVFRANIVVAESLADSPKMEQPYIEDQWEALKIGPGELRFDVLGSCQRCSMVCIDQFTGVRRDEPFSTLAKTRKINNKIVFGRHCSLSASEVTQDQHDNAERWTLMVGDIVIPSYAHDYTL</sequence>
<proteinExistence type="inferred from homology"/>
<keyword id="KW-0501">Molybdenum cofactor biosynthesis</keyword>
<keyword id="KW-0663">Pyridoxal phosphate</keyword>
<keyword id="KW-0808">Transferase</keyword>
<protein>
    <recommendedName>
        <fullName evidence="1">Molybdenum cofactor sulfurase</fullName>
        <shortName evidence="1">MCS</shortName>
        <shortName evidence="1">MOS</shortName>
        <shortName evidence="1">MoCo sulfurase</shortName>
        <ecNumber evidence="1">2.8.1.9</ecNumber>
    </recommendedName>
    <alternativeName>
        <fullName evidence="1">Molybdenum cofactor sulfurtransferase</fullName>
    </alternativeName>
</protein>
<dbReference type="EC" id="2.8.1.9" evidence="1"/>
<dbReference type="EMBL" id="DS499598">
    <property type="protein sequence ID" value="EDP50276.1"/>
    <property type="molecule type" value="Genomic_DNA"/>
</dbReference>
<dbReference type="SMR" id="B0Y691"/>
<dbReference type="EnsemblFungi" id="EDP50276">
    <property type="protein sequence ID" value="EDP50276"/>
    <property type="gene ID" value="AFUB_066090"/>
</dbReference>
<dbReference type="VEuPathDB" id="FungiDB:AFUB_066090"/>
<dbReference type="HOGENOM" id="CLU_010913_0_0_1"/>
<dbReference type="OrthoDB" id="56236at5052"/>
<dbReference type="PhylomeDB" id="B0Y691"/>
<dbReference type="Proteomes" id="UP000001699">
    <property type="component" value="Unassembled WGS sequence"/>
</dbReference>
<dbReference type="GO" id="GO:0016829">
    <property type="term" value="F:lyase activity"/>
    <property type="evidence" value="ECO:0007669"/>
    <property type="project" value="UniProtKB-UniRule"/>
</dbReference>
<dbReference type="GO" id="GO:0008265">
    <property type="term" value="F:molybdenum cofactor sulfurtransferase activity"/>
    <property type="evidence" value="ECO:0007669"/>
    <property type="project" value="UniProtKB-UniRule"/>
</dbReference>
<dbReference type="GO" id="GO:0030151">
    <property type="term" value="F:molybdenum ion binding"/>
    <property type="evidence" value="ECO:0007669"/>
    <property type="project" value="UniProtKB-UniRule"/>
</dbReference>
<dbReference type="GO" id="GO:0030170">
    <property type="term" value="F:pyridoxal phosphate binding"/>
    <property type="evidence" value="ECO:0007669"/>
    <property type="project" value="UniProtKB-UniRule"/>
</dbReference>
<dbReference type="GO" id="GO:0006777">
    <property type="term" value="P:Mo-molybdopterin cofactor biosynthetic process"/>
    <property type="evidence" value="ECO:0007669"/>
    <property type="project" value="UniProtKB-UniRule"/>
</dbReference>
<dbReference type="Gene3D" id="3.90.1150.10">
    <property type="entry name" value="Aspartate Aminotransferase, domain 1"/>
    <property type="match status" value="1"/>
</dbReference>
<dbReference type="Gene3D" id="3.40.640.10">
    <property type="entry name" value="Type I PLP-dependent aspartate aminotransferase-like (Major domain)"/>
    <property type="match status" value="1"/>
</dbReference>
<dbReference type="HAMAP" id="MF_03050">
    <property type="entry name" value="MOCOS"/>
    <property type="match status" value="1"/>
</dbReference>
<dbReference type="InterPro" id="IPR000192">
    <property type="entry name" value="Aminotrans_V_dom"/>
</dbReference>
<dbReference type="InterPro" id="IPR005302">
    <property type="entry name" value="MoCF_Sase_C"/>
</dbReference>
<dbReference type="InterPro" id="IPR028886">
    <property type="entry name" value="MoCo_sulfurase"/>
</dbReference>
<dbReference type="InterPro" id="IPR005303">
    <property type="entry name" value="MOCOS_middle"/>
</dbReference>
<dbReference type="InterPro" id="IPR015424">
    <property type="entry name" value="PyrdxlP-dep_Trfase"/>
</dbReference>
<dbReference type="InterPro" id="IPR015421">
    <property type="entry name" value="PyrdxlP-dep_Trfase_major"/>
</dbReference>
<dbReference type="InterPro" id="IPR015422">
    <property type="entry name" value="PyrdxlP-dep_Trfase_small"/>
</dbReference>
<dbReference type="PANTHER" id="PTHR14237:SF19">
    <property type="entry name" value="MITOCHONDRIAL AMIDOXIME REDUCING COMPONENT 1"/>
    <property type="match status" value="1"/>
</dbReference>
<dbReference type="PANTHER" id="PTHR14237">
    <property type="entry name" value="MOLYBDOPTERIN COFACTOR SULFURASE MOSC"/>
    <property type="match status" value="1"/>
</dbReference>
<dbReference type="Pfam" id="PF00266">
    <property type="entry name" value="Aminotran_5"/>
    <property type="match status" value="1"/>
</dbReference>
<dbReference type="Pfam" id="PF03473">
    <property type="entry name" value="MOSC"/>
    <property type="match status" value="1"/>
</dbReference>
<dbReference type="Pfam" id="PF03476">
    <property type="entry name" value="MOSC_N"/>
    <property type="match status" value="1"/>
</dbReference>
<dbReference type="SUPFAM" id="SSF141673">
    <property type="entry name" value="MOSC N-terminal domain-like"/>
    <property type="match status" value="1"/>
</dbReference>
<dbReference type="SUPFAM" id="SSF53383">
    <property type="entry name" value="PLP-dependent transferases"/>
    <property type="match status" value="1"/>
</dbReference>
<dbReference type="PROSITE" id="PS51340">
    <property type="entry name" value="MOSC"/>
    <property type="match status" value="1"/>
</dbReference>
<reference key="1">
    <citation type="journal article" date="2008" name="PLoS Genet.">
        <title>Genomic islands in the pathogenic filamentous fungus Aspergillus fumigatus.</title>
        <authorList>
            <person name="Fedorova N.D."/>
            <person name="Khaldi N."/>
            <person name="Joardar V.S."/>
            <person name="Maiti R."/>
            <person name="Amedeo P."/>
            <person name="Anderson M.J."/>
            <person name="Crabtree J."/>
            <person name="Silva J.C."/>
            <person name="Badger J.H."/>
            <person name="Albarraq A."/>
            <person name="Angiuoli S."/>
            <person name="Bussey H."/>
            <person name="Bowyer P."/>
            <person name="Cotty P.J."/>
            <person name="Dyer P.S."/>
            <person name="Egan A."/>
            <person name="Galens K."/>
            <person name="Fraser-Liggett C.M."/>
            <person name="Haas B.J."/>
            <person name="Inman J.M."/>
            <person name="Kent R."/>
            <person name="Lemieux S."/>
            <person name="Malavazi I."/>
            <person name="Orvis J."/>
            <person name="Roemer T."/>
            <person name="Ronning C.M."/>
            <person name="Sundaram J.P."/>
            <person name="Sutton G."/>
            <person name="Turner G."/>
            <person name="Venter J.C."/>
            <person name="White O.R."/>
            <person name="Whitty B.R."/>
            <person name="Youngman P."/>
            <person name="Wolfe K.H."/>
            <person name="Goldman G.H."/>
            <person name="Wortman J.R."/>
            <person name="Jiang B."/>
            <person name="Denning D.W."/>
            <person name="Nierman W.C."/>
        </authorList>
    </citation>
    <scope>NUCLEOTIDE SEQUENCE [LARGE SCALE GENOMIC DNA]</scope>
    <source>
        <strain>CBS 144.89 / FGSC A1163 / CEA10</strain>
    </source>
</reference>